<accession>Q98N34</accession>
<evidence type="ECO:0000255" key="1">
    <source>
        <dbReference type="HAMAP-Rule" id="MF_01310"/>
    </source>
</evidence>
<evidence type="ECO:0000305" key="2"/>
<name>RS11_RHILO</name>
<reference key="1">
    <citation type="journal article" date="2000" name="DNA Res.">
        <title>Complete genome structure of the nitrogen-fixing symbiotic bacterium Mesorhizobium loti.</title>
        <authorList>
            <person name="Kaneko T."/>
            <person name="Nakamura Y."/>
            <person name="Sato S."/>
            <person name="Asamizu E."/>
            <person name="Kato T."/>
            <person name="Sasamoto S."/>
            <person name="Watanabe A."/>
            <person name="Idesawa K."/>
            <person name="Ishikawa A."/>
            <person name="Kawashima K."/>
            <person name="Kimura T."/>
            <person name="Kishida Y."/>
            <person name="Kiyokawa C."/>
            <person name="Kohara M."/>
            <person name="Matsumoto M."/>
            <person name="Matsuno A."/>
            <person name="Mochizuki Y."/>
            <person name="Nakayama S."/>
            <person name="Nakazaki N."/>
            <person name="Shimpo S."/>
            <person name="Sugimoto M."/>
            <person name="Takeuchi C."/>
            <person name="Yamada M."/>
            <person name="Tabata S."/>
        </authorList>
    </citation>
    <scope>NUCLEOTIDE SEQUENCE [LARGE SCALE GENOMIC DNA]</scope>
    <source>
        <strain>LMG 29417 / CECT 9101 / MAFF 303099</strain>
    </source>
</reference>
<proteinExistence type="inferred from homology"/>
<keyword id="KW-0687">Ribonucleoprotein</keyword>
<keyword id="KW-0689">Ribosomal protein</keyword>
<keyword id="KW-0694">RNA-binding</keyword>
<keyword id="KW-0699">rRNA-binding</keyword>
<gene>
    <name evidence="1" type="primary">rpsK</name>
    <name type="ordered locus">mlr0324</name>
</gene>
<comment type="function">
    <text evidence="1">Located on the platform of the 30S subunit, it bridges several disparate RNA helices of the 16S rRNA. Forms part of the Shine-Dalgarno cleft in the 70S ribosome.</text>
</comment>
<comment type="subunit">
    <text evidence="1">Part of the 30S ribosomal subunit. Interacts with proteins S7 and S18. Binds to IF-3.</text>
</comment>
<comment type="similarity">
    <text evidence="1">Belongs to the universal ribosomal protein uS11 family.</text>
</comment>
<dbReference type="EMBL" id="BA000012">
    <property type="protein sequence ID" value="BAB47929.1"/>
    <property type="molecule type" value="Genomic_DNA"/>
</dbReference>
<dbReference type="RefSeq" id="WP_006205444.1">
    <property type="nucleotide sequence ID" value="NC_002678.2"/>
</dbReference>
<dbReference type="SMR" id="Q98N34"/>
<dbReference type="GeneID" id="91561397"/>
<dbReference type="KEGG" id="mlo:mlr0324"/>
<dbReference type="eggNOG" id="COG0100">
    <property type="taxonomic scope" value="Bacteria"/>
</dbReference>
<dbReference type="HOGENOM" id="CLU_072439_5_0_5"/>
<dbReference type="Proteomes" id="UP000000552">
    <property type="component" value="Chromosome"/>
</dbReference>
<dbReference type="GO" id="GO:1990904">
    <property type="term" value="C:ribonucleoprotein complex"/>
    <property type="evidence" value="ECO:0007669"/>
    <property type="project" value="UniProtKB-KW"/>
</dbReference>
<dbReference type="GO" id="GO:0005840">
    <property type="term" value="C:ribosome"/>
    <property type="evidence" value="ECO:0007669"/>
    <property type="project" value="UniProtKB-KW"/>
</dbReference>
<dbReference type="GO" id="GO:0019843">
    <property type="term" value="F:rRNA binding"/>
    <property type="evidence" value="ECO:0007669"/>
    <property type="project" value="UniProtKB-UniRule"/>
</dbReference>
<dbReference type="GO" id="GO:0003735">
    <property type="term" value="F:structural constituent of ribosome"/>
    <property type="evidence" value="ECO:0007669"/>
    <property type="project" value="InterPro"/>
</dbReference>
<dbReference type="GO" id="GO:0006412">
    <property type="term" value="P:translation"/>
    <property type="evidence" value="ECO:0007669"/>
    <property type="project" value="UniProtKB-UniRule"/>
</dbReference>
<dbReference type="FunFam" id="3.30.420.80:FF:000001">
    <property type="entry name" value="30S ribosomal protein S11"/>
    <property type="match status" value="1"/>
</dbReference>
<dbReference type="Gene3D" id="3.30.420.80">
    <property type="entry name" value="Ribosomal protein S11"/>
    <property type="match status" value="1"/>
</dbReference>
<dbReference type="HAMAP" id="MF_01310">
    <property type="entry name" value="Ribosomal_uS11"/>
    <property type="match status" value="1"/>
</dbReference>
<dbReference type="InterPro" id="IPR001971">
    <property type="entry name" value="Ribosomal_uS11"/>
</dbReference>
<dbReference type="InterPro" id="IPR019981">
    <property type="entry name" value="Ribosomal_uS11_bac-type"/>
</dbReference>
<dbReference type="InterPro" id="IPR018102">
    <property type="entry name" value="Ribosomal_uS11_CS"/>
</dbReference>
<dbReference type="InterPro" id="IPR036967">
    <property type="entry name" value="Ribosomal_uS11_sf"/>
</dbReference>
<dbReference type="NCBIfam" id="NF003698">
    <property type="entry name" value="PRK05309.1"/>
    <property type="match status" value="1"/>
</dbReference>
<dbReference type="NCBIfam" id="TIGR03632">
    <property type="entry name" value="uS11_bact"/>
    <property type="match status" value="1"/>
</dbReference>
<dbReference type="PANTHER" id="PTHR11759">
    <property type="entry name" value="40S RIBOSOMAL PROTEIN S14/30S RIBOSOMAL PROTEIN S11"/>
    <property type="match status" value="1"/>
</dbReference>
<dbReference type="Pfam" id="PF00411">
    <property type="entry name" value="Ribosomal_S11"/>
    <property type="match status" value="1"/>
</dbReference>
<dbReference type="PIRSF" id="PIRSF002131">
    <property type="entry name" value="Ribosomal_S11"/>
    <property type="match status" value="1"/>
</dbReference>
<dbReference type="SUPFAM" id="SSF53137">
    <property type="entry name" value="Translational machinery components"/>
    <property type="match status" value="1"/>
</dbReference>
<dbReference type="PROSITE" id="PS00054">
    <property type="entry name" value="RIBOSOMAL_S11"/>
    <property type="match status" value="1"/>
</dbReference>
<protein>
    <recommendedName>
        <fullName evidence="1">Small ribosomal subunit protein uS11</fullName>
    </recommendedName>
    <alternativeName>
        <fullName evidence="2">30S ribosomal protein S11</fullName>
    </alternativeName>
</protein>
<feature type="chain" id="PRO_0000123205" description="Small ribosomal subunit protein uS11">
    <location>
        <begin position="1"/>
        <end position="129"/>
    </location>
</feature>
<sequence>MAKEAARVRRRERKNISSGVAHVNSTFNNTMITITDAQGNSIAWSSAGAQGFKGSRKSTPFAAQMAAEDVAKKAQEHGMRMLEVEVCGPGSGRESALRALQAAGFTITSIRDVTPIPHNGCRPRKKRRV</sequence>
<organism>
    <name type="scientific">Mesorhizobium japonicum (strain LMG 29417 / CECT 9101 / MAFF 303099)</name>
    <name type="common">Mesorhizobium loti (strain MAFF 303099)</name>
    <dbReference type="NCBI Taxonomy" id="266835"/>
    <lineage>
        <taxon>Bacteria</taxon>
        <taxon>Pseudomonadati</taxon>
        <taxon>Pseudomonadota</taxon>
        <taxon>Alphaproteobacteria</taxon>
        <taxon>Hyphomicrobiales</taxon>
        <taxon>Phyllobacteriaceae</taxon>
        <taxon>Mesorhizobium</taxon>
    </lineage>
</organism>